<evidence type="ECO:0000250" key="1"/>
<evidence type="ECO:0000269" key="2">
    <source>
    </source>
</evidence>
<evidence type="ECO:0000305" key="3"/>
<evidence type="ECO:0007744" key="4">
    <source>
        <dbReference type="PDB" id="6HA1"/>
    </source>
</evidence>
<evidence type="ECO:0007744" key="5">
    <source>
        <dbReference type="PDB" id="6HA8"/>
    </source>
</evidence>
<evidence type="ECO:0007829" key="6">
    <source>
        <dbReference type="PDB" id="8S1P"/>
    </source>
</evidence>
<feature type="chain" id="PRO_0000177120" description="Large ribosomal subunit protein bL20">
    <location>
        <begin position="1"/>
        <end position="119"/>
    </location>
</feature>
<feature type="helix" evidence="6">
    <location>
        <begin position="9"/>
        <end position="20"/>
    </location>
</feature>
<feature type="turn" evidence="6">
    <location>
        <begin position="21"/>
        <end position="23"/>
    </location>
</feature>
<feature type="helix" evidence="6">
    <location>
        <begin position="26"/>
        <end position="29"/>
    </location>
</feature>
<feature type="helix" evidence="6">
    <location>
        <begin position="32"/>
        <end position="71"/>
    </location>
</feature>
<feature type="helix" evidence="6">
    <location>
        <begin position="76"/>
        <end position="86"/>
    </location>
</feature>
<feature type="helix" evidence="6">
    <location>
        <begin position="92"/>
        <end position="101"/>
    </location>
</feature>
<feature type="helix" evidence="6">
    <location>
        <begin position="103"/>
        <end position="117"/>
    </location>
</feature>
<dbReference type="EMBL" id="Z75208">
    <property type="protein sequence ID" value="CAA99618.1"/>
    <property type="molecule type" value="Genomic_DNA"/>
</dbReference>
<dbReference type="EMBL" id="AL009126">
    <property type="protein sequence ID" value="CAB14845.1"/>
    <property type="molecule type" value="Genomic_DNA"/>
</dbReference>
<dbReference type="PIR" id="F69696">
    <property type="entry name" value="F69696"/>
</dbReference>
<dbReference type="RefSeq" id="NP_390763.1">
    <property type="nucleotide sequence ID" value="NC_000964.3"/>
</dbReference>
<dbReference type="RefSeq" id="WP_003222420.1">
    <property type="nucleotide sequence ID" value="NZ_OZ025638.1"/>
</dbReference>
<dbReference type="PDB" id="3J3V">
    <property type="method" value="EM"/>
    <property type="resolution" value="13.30 A"/>
    <property type="chains" value="Q=1-119"/>
</dbReference>
<dbReference type="PDB" id="3J3W">
    <property type="method" value="EM"/>
    <property type="resolution" value="10.70 A"/>
    <property type="chains" value="Q=1-119"/>
</dbReference>
<dbReference type="PDB" id="3J9W">
    <property type="method" value="EM"/>
    <property type="resolution" value="3.90 A"/>
    <property type="chains" value="BT=1-119"/>
</dbReference>
<dbReference type="PDB" id="5NJT">
    <property type="method" value="EM"/>
    <property type="resolution" value="3.80 A"/>
    <property type="chains" value="j=2-118"/>
</dbReference>
<dbReference type="PDB" id="6HA1">
    <property type="method" value="EM"/>
    <property type="resolution" value="3.10 A"/>
    <property type="chains" value="Q=1-119"/>
</dbReference>
<dbReference type="PDB" id="6HA8">
    <property type="method" value="EM"/>
    <property type="resolution" value="3.50 A"/>
    <property type="chains" value="Q=1-119"/>
</dbReference>
<dbReference type="PDB" id="6HTQ">
    <property type="method" value="EM"/>
    <property type="resolution" value="4.50 A"/>
    <property type="chains" value="Q=2-118"/>
</dbReference>
<dbReference type="PDB" id="6PPF">
    <property type="method" value="EM"/>
    <property type="resolution" value="3.40 A"/>
    <property type="chains" value="Q=2-119"/>
</dbReference>
<dbReference type="PDB" id="6PPK">
    <property type="method" value="EM"/>
    <property type="resolution" value="4.40 A"/>
    <property type="chains" value="Q=2-119"/>
</dbReference>
<dbReference type="PDB" id="6PVK">
    <property type="method" value="EM"/>
    <property type="resolution" value="3.40 A"/>
    <property type="chains" value="Q=2-119"/>
</dbReference>
<dbReference type="PDB" id="6TNN">
    <property type="method" value="EM"/>
    <property type="resolution" value="3.07 A"/>
    <property type="chains" value="j=1-119"/>
</dbReference>
<dbReference type="PDB" id="6TPQ">
    <property type="method" value="EM"/>
    <property type="resolution" value="3.07 A"/>
    <property type="chains" value="j=1-119"/>
</dbReference>
<dbReference type="PDB" id="7AQC">
    <property type="method" value="EM"/>
    <property type="resolution" value="2.99 A"/>
    <property type="chains" value="Q=1-119"/>
</dbReference>
<dbReference type="PDB" id="7AQD">
    <property type="method" value="EM"/>
    <property type="resolution" value="3.10 A"/>
    <property type="chains" value="Q=1-119"/>
</dbReference>
<dbReference type="PDB" id="7AS8">
    <property type="method" value="EM"/>
    <property type="resolution" value="2.90 A"/>
    <property type="chains" value="U=1-119"/>
</dbReference>
<dbReference type="PDB" id="7AS9">
    <property type="method" value="EM"/>
    <property type="resolution" value="3.50 A"/>
    <property type="chains" value="U=1-119"/>
</dbReference>
<dbReference type="PDB" id="7O5B">
    <property type="method" value="EM"/>
    <property type="resolution" value="3.33 A"/>
    <property type="chains" value="n=1-119"/>
</dbReference>
<dbReference type="PDB" id="7OPE">
    <property type="method" value="EM"/>
    <property type="resolution" value="3.20 A"/>
    <property type="chains" value="U=1-119"/>
</dbReference>
<dbReference type="PDB" id="7QGU">
    <property type="method" value="EM"/>
    <property type="resolution" value="4.75 A"/>
    <property type="chains" value="Q=1-119"/>
</dbReference>
<dbReference type="PDB" id="7QH4">
    <property type="method" value="EM"/>
    <property type="resolution" value="5.45 A"/>
    <property type="chains" value="Q=1-119"/>
</dbReference>
<dbReference type="PDB" id="7QV1">
    <property type="method" value="EM"/>
    <property type="resolution" value="3.50 A"/>
    <property type="chains" value="Q=1-119"/>
</dbReference>
<dbReference type="PDB" id="7QV2">
    <property type="method" value="EM"/>
    <property type="resolution" value="3.50 A"/>
    <property type="chains" value="Q=1-119"/>
</dbReference>
<dbReference type="PDB" id="7QV3">
    <property type="method" value="EM"/>
    <property type="resolution" value="5.14 A"/>
    <property type="chains" value="Q=1-119"/>
</dbReference>
<dbReference type="PDB" id="7S9U">
    <property type="method" value="EM"/>
    <property type="resolution" value="3.20 A"/>
    <property type="chains" value="Q=1-119"/>
</dbReference>
<dbReference type="PDB" id="7SAE">
    <property type="method" value="EM"/>
    <property type="resolution" value="3.00 A"/>
    <property type="chains" value="Q=1-119"/>
</dbReference>
<dbReference type="PDB" id="8BUU">
    <property type="method" value="EM"/>
    <property type="resolution" value="2.90 A"/>
    <property type="chains" value="Q=1-119"/>
</dbReference>
<dbReference type="PDB" id="8QCQ">
    <property type="method" value="EM"/>
    <property type="resolution" value="2.30 A"/>
    <property type="chains" value="Q=1-119"/>
</dbReference>
<dbReference type="PDB" id="8QPP">
    <property type="method" value="EM"/>
    <property type="resolution" value="3.40 A"/>
    <property type="chains" value="n=2-118"/>
</dbReference>
<dbReference type="PDB" id="8R55">
    <property type="method" value="EM"/>
    <property type="resolution" value="3.57 A"/>
    <property type="chains" value="n=2-118"/>
</dbReference>
<dbReference type="PDB" id="8S1P">
    <property type="method" value="EM"/>
    <property type="resolution" value="1.96 A"/>
    <property type="chains" value="Q=1-119"/>
</dbReference>
<dbReference type="PDB" id="8S1U">
    <property type="method" value="EM"/>
    <property type="resolution" value="3.40 A"/>
    <property type="chains" value="Q=1-119"/>
</dbReference>
<dbReference type="PDB" id="9BS0">
    <property type="method" value="EM"/>
    <property type="resolution" value="3.30 A"/>
    <property type="chains" value="L=2-119"/>
</dbReference>
<dbReference type="PDB" id="9BSL">
    <property type="method" value="EM"/>
    <property type="resolution" value="3.10 A"/>
    <property type="chains" value="L=2-119"/>
</dbReference>
<dbReference type="PDB" id="9BSS">
    <property type="method" value="EM"/>
    <property type="resolution" value="3.10 A"/>
    <property type="chains" value="L=2-119"/>
</dbReference>
<dbReference type="PDBsum" id="3J3V"/>
<dbReference type="PDBsum" id="3J3W"/>
<dbReference type="PDBsum" id="3J9W"/>
<dbReference type="PDBsum" id="5NJT"/>
<dbReference type="PDBsum" id="6HA1"/>
<dbReference type="PDBsum" id="6HA8"/>
<dbReference type="PDBsum" id="6HTQ"/>
<dbReference type="PDBsum" id="6PPF"/>
<dbReference type="PDBsum" id="6PPK"/>
<dbReference type="PDBsum" id="6PVK"/>
<dbReference type="PDBsum" id="6TNN"/>
<dbReference type="PDBsum" id="6TPQ"/>
<dbReference type="PDBsum" id="7AQC"/>
<dbReference type="PDBsum" id="7AQD"/>
<dbReference type="PDBsum" id="7AS8"/>
<dbReference type="PDBsum" id="7AS9"/>
<dbReference type="PDBsum" id="7O5B"/>
<dbReference type="PDBsum" id="7OPE"/>
<dbReference type="PDBsum" id="7QGU"/>
<dbReference type="PDBsum" id="7QH4"/>
<dbReference type="PDBsum" id="7QV1"/>
<dbReference type="PDBsum" id="7QV2"/>
<dbReference type="PDBsum" id="7QV3"/>
<dbReference type="PDBsum" id="7S9U"/>
<dbReference type="PDBsum" id="7SAE"/>
<dbReference type="PDBsum" id="8BUU"/>
<dbReference type="PDBsum" id="8QCQ"/>
<dbReference type="PDBsum" id="8QPP"/>
<dbReference type="PDBsum" id="8R55"/>
<dbReference type="PDBsum" id="8S1P"/>
<dbReference type="PDBsum" id="8S1U"/>
<dbReference type="PDBsum" id="9BS0"/>
<dbReference type="PDBsum" id="9BSL"/>
<dbReference type="PDBsum" id="9BSS"/>
<dbReference type="EMDB" id="EMD-0176"/>
<dbReference type="EMDB" id="EMD-0177"/>
<dbReference type="EMDB" id="EMD-0270"/>
<dbReference type="EMDB" id="EMD-10535"/>
<dbReference type="EMDB" id="EMD-10543"/>
<dbReference type="EMDB" id="EMD-11862"/>
<dbReference type="EMDB" id="EMD-11864"/>
<dbReference type="EMDB" id="EMD-11889"/>
<dbReference type="EMDB" id="EMD-11890"/>
<dbReference type="EMDB" id="EMD-12734"/>
<dbReference type="EMDB" id="EMD-13017"/>
<dbReference type="EMDB" id="EMD-14157"/>
<dbReference type="EMDB" id="EMD-14158"/>
<dbReference type="EMDB" id="EMD-14159"/>
<dbReference type="EMDB" id="EMD-16246"/>
<dbReference type="EMDB" id="EMD-18332"/>
<dbReference type="EMDB" id="EMD-19638"/>
<dbReference type="EMDB" id="EMD-19641"/>
<dbReference type="EMDB" id="EMD-24937"/>
<dbReference type="EMDB" id="EMD-24950"/>
<dbReference type="EMDB" id="EMD-3656"/>
<dbReference type="EMDB" id="EMD-44849"/>
<dbReference type="EMDB" id="EMD-44869"/>
<dbReference type="EMDB" id="EMD-44871"/>
<dbReference type="SMR" id="P55873"/>
<dbReference type="FunCoup" id="P55873">
    <property type="interactions" value="607"/>
</dbReference>
<dbReference type="IntAct" id="P55873">
    <property type="interactions" value="1"/>
</dbReference>
<dbReference type="STRING" id="224308.BSU28850"/>
<dbReference type="jPOST" id="P55873"/>
<dbReference type="PaxDb" id="224308-BSU28850"/>
<dbReference type="DNASU" id="936645"/>
<dbReference type="EnsemblBacteria" id="CAB14845">
    <property type="protein sequence ID" value="CAB14845"/>
    <property type="gene ID" value="BSU_28850"/>
</dbReference>
<dbReference type="GeneID" id="76983522"/>
<dbReference type="GeneID" id="936645"/>
<dbReference type="KEGG" id="bsu:BSU28850"/>
<dbReference type="PATRIC" id="fig|224308.179.peg.3133"/>
<dbReference type="eggNOG" id="COG0292">
    <property type="taxonomic scope" value="Bacteria"/>
</dbReference>
<dbReference type="InParanoid" id="P55873"/>
<dbReference type="OrthoDB" id="9808966at2"/>
<dbReference type="PhylomeDB" id="P55873"/>
<dbReference type="BioCyc" id="BSUB:BSU28850-MONOMER"/>
<dbReference type="EvolutionaryTrace" id="P55873"/>
<dbReference type="Proteomes" id="UP000001570">
    <property type="component" value="Chromosome"/>
</dbReference>
<dbReference type="GO" id="GO:0022625">
    <property type="term" value="C:cytosolic large ribosomal subunit"/>
    <property type="evidence" value="ECO:0000318"/>
    <property type="project" value="GO_Central"/>
</dbReference>
<dbReference type="GO" id="GO:0019843">
    <property type="term" value="F:rRNA binding"/>
    <property type="evidence" value="ECO:0007669"/>
    <property type="project" value="UniProtKB-UniRule"/>
</dbReference>
<dbReference type="GO" id="GO:0003735">
    <property type="term" value="F:structural constituent of ribosome"/>
    <property type="evidence" value="ECO:0000318"/>
    <property type="project" value="GO_Central"/>
</dbReference>
<dbReference type="GO" id="GO:0000027">
    <property type="term" value="P:ribosomal large subunit assembly"/>
    <property type="evidence" value="ECO:0007669"/>
    <property type="project" value="UniProtKB-UniRule"/>
</dbReference>
<dbReference type="GO" id="GO:0006412">
    <property type="term" value="P:translation"/>
    <property type="evidence" value="ECO:0007669"/>
    <property type="project" value="InterPro"/>
</dbReference>
<dbReference type="CDD" id="cd07026">
    <property type="entry name" value="Ribosomal_L20"/>
    <property type="match status" value="1"/>
</dbReference>
<dbReference type="FunFam" id="1.10.1900.20:FF:000001">
    <property type="entry name" value="50S ribosomal protein L20"/>
    <property type="match status" value="1"/>
</dbReference>
<dbReference type="Gene3D" id="6.10.160.10">
    <property type="match status" value="1"/>
</dbReference>
<dbReference type="Gene3D" id="1.10.1900.20">
    <property type="entry name" value="Ribosomal protein L20"/>
    <property type="match status" value="1"/>
</dbReference>
<dbReference type="HAMAP" id="MF_00382">
    <property type="entry name" value="Ribosomal_bL20"/>
    <property type="match status" value="1"/>
</dbReference>
<dbReference type="InterPro" id="IPR005813">
    <property type="entry name" value="Ribosomal_bL20"/>
</dbReference>
<dbReference type="InterPro" id="IPR049946">
    <property type="entry name" value="RIBOSOMAL_L20_CS"/>
</dbReference>
<dbReference type="InterPro" id="IPR035566">
    <property type="entry name" value="Ribosomal_protein_bL20_C"/>
</dbReference>
<dbReference type="NCBIfam" id="TIGR01032">
    <property type="entry name" value="rplT_bact"/>
    <property type="match status" value="1"/>
</dbReference>
<dbReference type="PANTHER" id="PTHR10986">
    <property type="entry name" value="39S RIBOSOMAL PROTEIN L20"/>
    <property type="match status" value="1"/>
</dbReference>
<dbReference type="Pfam" id="PF00453">
    <property type="entry name" value="Ribosomal_L20"/>
    <property type="match status" value="1"/>
</dbReference>
<dbReference type="PRINTS" id="PR00062">
    <property type="entry name" value="RIBOSOMALL20"/>
</dbReference>
<dbReference type="SUPFAM" id="SSF74731">
    <property type="entry name" value="Ribosomal protein L20"/>
    <property type="match status" value="1"/>
</dbReference>
<dbReference type="PROSITE" id="PS00937">
    <property type="entry name" value="RIBOSOMAL_L20"/>
    <property type="match status" value="1"/>
</dbReference>
<name>RL20_BACSU</name>
<organism>
    <name type="scientific">Bacillus subtilis (strain 168)</name>
    <dbReference type="NCBI Taxonomy" id="224308"/>
    <lineage>
        <taxon>Bacteria</taxon>
        <taxon>Bacillati</taxon>
        <taxon>Bacillota</taxon>
        <taxon>Bacilli</taxon>
        <taxon>Bacillales</taxon>
        <taxon>Bacillaceae</taxon>
        <taxon>Bacillus</taxon>
    </lineage>
</organism>
<comment type="function">
    <text evidence="1">Binds directly to 23S ribosomal RNA and is necessary for the in vitro assembly process of the 50S ribosomal subunit. It is not involved in the protein synthesizing functions of that subunit (By similarity).</text>
</comment>
<comment type="subunit">
    <text evidence="2">Part of the 50S ribosomal subunit.</text>
</comment>
<comment type="similarity">
    <text evidence="3">Belongs to the bacterial ribosomal protein bL20 family.</text>
</comment>
<reference key="1">
    <citation type="journal article" date="1996" name="Microbiology">
        <title>The dnaB-pheA (256 degrees-240 degrees) region of the Bacillus subtilis chromosome containing genes responsible for stress responses, the utilization of plant cell walls and primary metabolism.</title>
        <authorList>
            <person name="Wipat A."/>
            <person name="Carter N."/>
            <person name="Brignell C.S."/>
            <person name="Guy J.B."/>
            <person name="Piper K."/>
            <person name="Sanders J."/>
            <person name="Emmerson P.T."/>
            <person name="Harwood C.R."/>
        </authorList>
    </citation>
    <scope>NUCLEOTIDE SEQUENCE [GENOMIC DNA]</scope>
    <source>
        <strain>168</strain>
    </source>
</reference>
<reference key="2">
    <citation type="journal article" date="1997" name="Nature">
        <title>The complete genome sequence of the Gram-positive bacterium Bacillus subtilis.</title>
        <authorList>
            <person name="Kunst F."/>
            <person name="Ogasawara N."/>
            <person name="Moszer I."/>
            <person name="Albertini A.M."/>
            <person name="Alloni G."/>
            <person name="Azevedo V."/>
            <person name="Bertero M.G."/>
            <person name="Bessieres P."/>
            <person name="Bolotin A."/>
            <person name="Borchert S."/>
            <person name="Borriss R."/>
            <person name="Boursier L."/>
            <person name="Brans A."/>
            <person name="Braun M."/>
            <person name="Brignell S.C."/>
            <person name="Bron S."/>
            <person name="Brouillet S."/>
            <person name="Bruschi C.V."/>
            <person name="Caldwell B."/>
            <person name="Capuano V."/>
            <person name="Carter N.M."/>
            <person name="Choi S.-K."/>
            <person name="Codani J.-J."/>
            <person name="Connerton I.F."/>
            <person name="Cummings N.J."/>
            <person name="Daniel R.A."/>
            <person name="Denizot F."/>
            <person name="Devine K.M."/>
            <person name="Duesterhoeft A."/>
            <person name="Ehrlich S.D."/>
            <person name="Emmerson P.T."/>
            <person name="Entian K.-D."/>
            <person name="Errington J."/>
            <person name="Fabret C."/>
            <person name="Ferrari E."/>
            <person name="Foulger D."/>
            <person name="Fritz C."/>
            <person name="Fujita M."/>
            <person name="Fujita Y."/>
            <person name="Fuma S."/>
            <person name="Galizzi A."/>
            <person name="Galleron N."/>
            <person name="Ghim S.-Y."/>
            <person name="Glaser P."/>
            <person name="Goffeau A."/>
            <person name="Golightly E.J."/>
            <person name="Grandi G."/>
            <person name="Guiseppi G."/>
            <person name="Guy B.J."/>
            <person name="Haga K."/>
            <person name="Haiech J."/>
            <person name="Harwood C.R."/>
            <person name="Henaut A."/>
            <person name="Hilbert H."/>
            <person name="Holsappel S."/>
            <person name="Hosono S."/>
            <person name="Hullo M.-F."/>
            <person name="Itaya M."/>
            <person name="Jones L.-M."/>
            <person name="Joris B."/>
            <person name="Karamata D."/>
            <person name="Kasahara Y."/>
            <person name="Klaerr-Blanchard M."/>
            <person name="Klein C."/>
            <person name="Kobayashi Y."/>
            <person name="Koetter P."/>
            <person name="Koningstein G."/>
            <person name="Krogh S."/>
            <person name="Kumano M."/>
            <person name="Kurita K."/>
            <person name="Lapidus A."/>
            <person name="Lardinois S."/>
            <person name="Lauber J."/>
            <person name="Lazarevic V."/>
            <person name="Lee S.-M."/>
            <person name="Levine A."/>
            <person name="Liu H."/>
            <person name="Masuda S."/>
            <person name="Mauel C."/>
            <person name="Medigue C."/>
            <person name="Medina N."/>
            <person name="Mellado R.P."/>
            <person name="Mizuno M."/>
            <person name="Moestl D."/>
            <person name="Nakai S."/>
            <person name="Noback M."/>
            <person name="Noone D."/>
            <person name="O'Reilly M."/>
            <person name="Ogawa K."/>
            <person name="Ogiwara A."/>
            <person name="Oudega B."/>
            <person name="Park S.-H."/>
            <person name="Parro V."/>
            <person name="Pohl T.M."/>
            <person name="Portetelle D."/>
            <person name="Porwollik S."/>
            <person name="Prescott A.M."/>
            <person name="Presecan E."/>
            <person name="Pujic P."/>
            <person name="Purnelle B."/>
            <person name="Rapoport G."/>
            <person name="Rey M."/>
            <person name="Reynolds S."/>
            <person name="Rieger M."/>
            <person name="Rivolta C."/>
            <person name="Rocha E."/>
            <person name="Roche B."/>
            <person name="Rose M."/>
            <person name="Sadaie Y."/>
            <person name="Sato T."/>
            <person name="Scanlan E."/>
            <person name="Schleich S."/>
            <person name="Schroeter R."/>
            <person name="Scoffone F."/>
            <person name="Sekiguchi J."/>
            <person name="Sekowska A."/>
            <person name="Seror S.J."/>
            <person name="Serror P."/>
            <person name="Shin B.-S."/>
            <person name="Soldo B."/>
            <person name="Sorokin A."/>
            <person name="Tacconi E."/>
            <person name="Takagi T."/>
            <person name="Takahashi H."/>
            <person name="Takemaru K."/>
            <person name="Takeuchi M."/>
            <person name="Tamakoshi A."/>
            <person name="Tanaka T."/>
            <person name="Terpstra P."/>
            <person name="Tognoni A."/>
            <person name="Tosato V."/>
            <person name="Uchiyama S."/>
            <person name="Vandenbol M."/>
            <person name="Vannier F."/>
            <person name="Vassarotti A."/>
            <person name="Viari A."/>
            <person name="Wambutt R."/>
            <person name="Wedler E."/>
            <person name="Wedler H."/>
            <person name="Weitzenegger T."/>
            <person name="Winters P."/>
            <person name="Wipat A."/>
            <person name="Yamamoto H."/>
            <person name="Yamane K."/>
            <person name="Yasumoto K."/>
            <person name="Yata K."/>
            <person name="Yoshida K."/>
            <person name="Yoshikawa H.-F."/>
            <person name="Zumstein E."/>
            <person name="Yoshikawa H."/>
            <person name="Danchin A."/>
        </authorList>
    </citation>
    <scope>NUCLEOTIDE SEQUENCE [LARGE SCALE GENOMIC DNA]</scope>
    <source>
        <strain>168</strain>
    </source>
</reference>
<reference evidence="4 5" key="3">
    <citation type="journal article" date="2018" name="Proc. Natl. Acad. Sci. U.S.A.">
        <title>Structural basis for antibiotic resistance mediated by the Bacillus subtilis ABCF ATPase VmlR.</title>
        <authorList>
            <person name="Crowe-McAuliffe C."/>
            <person name="Graf M."/>
            <person name="Huter P."/>
            <person name="Takada H."/>
            <person name="Abdelshahid M."/>
            <person name="Novacek J."/>
            <person name="Murina V."/>
            <person name="Atkinson G.C."/>
            <person name="Hauryliuk V."/>
            <person name="Wilson D.N."/>
        </authorList>
    </citation>
    <scope>STRUCTURE BY ELECTRON MICROSCOPY (3.10 ANGSTROMS) OF 1-119 WITH AND WITHOUT VIRGINIAMYCIN M</scope>
    <scope>SUBUNIT</scope>
</reference>
<proteinExistence type="evidence at protein level"/>
<gene>
    <name type="primary">rplT</name>
    <name type="ordered locus">BSU28850</name>
</gene>
<sequence>MPRVKGGTVTRKRRKKVLKLAKGYFGSKHTLYKVANQQVMKSGNYAFRDRRQKKRDFRKLWITRINAAARMNGLSYSRLMHGLKLSGIEVNRKMLADLAVNDLTAFNQLADAAKAQLNK</sequence>
<keyword id="KW-0002">3D-structure</keyword>
<keyword id="KW-1185">Reference proteome</keyword>
<keyword id="KW-0687">Ribonucleoprotein</keyword>
<keyword id="KW-0689">Ribosomal protein</keyword>
<keyword id="KW-0694">RNA-binding</keyword>
<keyword id="KW-0699">rRNA-binding</keyword>
<accession>P55873</accession>
<protein>
    <recommendedName>
        <fullName evidence="3">Large ribosomal subunit protein bL20</fullName>
    </recommendedName>
    <alternativeName>
        <fullName>50S ribosomal protein L20</fullName>
    </alternativeName>
</protein>